<evidence type="ECO:0000255" key="1">
    <source>
        <dbReference type="HAMAP-Rule" id="MF_00451"/>
    </source>
</evidence>
<organism>
    <name type="scientific">Rhodococcus jostii (strain RHA1)</name>
    <dbReference type="NCBI Taxonomy" id="101510"/>
    <lineage>
        <taxon>Bacteria</taxon>
        <taxon>Bacillati</taxon>
        <taxon>Actinomycetota</taxon>
        <taxon>Actinomycetes</taxon>
        <taxon>Mycobacteriales</taxon>
        <taxon>Nocardiaceae</taxon>
        <taxon>Rhodococcus</taxon>
    </lineage>
</organism>
<gene>
    <name evidence="1" type="primary">ndk</name>
    <name type="ordered locus">RHA1_ro01315</name>
</gene>
<sequence>MTERTLVLIKPDAVARGYVGEILGRIERKGLTISALDLRTAPGDIAAAHYAEHEGRPFYPGLLEFITGGPLVAAVLEGPRAIAAFRQLAGGTDPVEKAVPGTIRGDFGLEAQENLVHGSDSVESAEREIALWFPHLAAN</sequence>
<comment type="function">
    <text evidence="1">Major role in the synthesis of nucleoside triphosphates other than ATP. The ATP gamma phosphate is transferred to the NDP beta phosphate via a ping-pong mechanism, using a phosphorylated active-site intermediate.</text>
</comment>
<comment type="catalytic activity">
    <reaction evidence="1">
        <text>a 2'-deoxyribonucleoside 5'-diphosphate + ATP = a 2'-deoxyribonucleoside 5'-triphosphate + ADP</text>
        <dbReference type="Rhea" id="RHEA:44640"/>
        <dbReference type="ChEBI" id="CHEBI:30616"/>
        <dbReference type="ChEBI" id="CHEBI:61560"/>
        <dbReference type="ChEBI" id="CHEBI:73316"/>
        <dbReference type="ChEBI" id="CHEBI:456216"/>
        <dbReference type="EC" id="2.7.4.6"/>
    </reaction>
</comment>
<comment type="catalytic activity">
    <reaction evidence="1">
        <text>a ribonucleoside 5'-diphosphate + ATP = a ribonucleoside 5'-triphosphate + ADP</text>
        <dbReference type="Rhea" id="RHEA:18113"/>
        <dbReference type="ChEBI" id="CHEBI:30616"/>
        <dbReference type="ChEBI" id="CHEBI:57930"/>
        <dbReference type="ChEBI" id="CHEBI:61557"/>
        <dbReference type="ChEBI" id="CHEBI:456216"/>
        <dbReference type="EC" id="2.7.4.6"/>
    </reaction>
</comment>
<comment type="cofactor">
    <cofactor evidence="1">
        <name>Mg(2+)</name>
        <dbReference type="ChEBI" id="CHEBI:18420"/>
    </cofactor>
</comment>
<comment type="subunit">
    <text evidence="1">Homotetramer.</text>
</comment>
<comment type="subcellular location">
    <subcellularLocation>
        <location evidence="1">Cytoplasm</location>
    </subcellularLocation>
</comment>
<comment type="similarity">
    <text evidence="1">Belongs to the NDK family.</text>
</comment>
<protein>
    <recommendedName>
        <fullName evidence="1">Nucleoside diphosphate kinase</fullName>
        <shortName evidence="1">NDK</shortName>
        <shortName evidence="1">NDP kinase</shortName>
        <ecNumber evidence="1">2.7.4.6</ecNumber>
    </recommendedName>
    <alternativeName>
        <fullName evidence="1">Nucleoside-2-P kinase</fullName>
    </alternativeName>
</protein>
<proteinExistence type="inferred from homology"/>
<feature type="chain" id="PRO_0000267796" description="Nucleoside diphosphate kinase">
    <location>
        <begin position="1"/>
        <end position="139"/>
    </location>
</feature>
<feature type="active site" description="Pros-phosphohistidine intermediate" evidence="1">
    <location>
        <position position="117"/>
    </location>
</feature>
<feature type="binding site" evidence="1">
    <location>
        <position position="10"/>
    </location>
    <ligand>
        <name>ATP</name>
        <dbReference type="ChEBI" id="CHEBI:30616"/>
    </ligand>
</feature>
<feature type="binding site" evidence="1">
    <location>
        <position position="58"/>
    </location>
    <ligand>
        <name>ATP</name>
        <dbReference type="ChEBI" id="CHEBI:30616"/>
    </ligand>
</feature>
<feature type="binding site" evidence="1">
    <location>
        <position position="86"/>
    </location>
    <ligand>
        <name>ATP</name>
        <dbReference type="ChEBI" id="CHEBI:30616"/>
    </ligand>
</feature>
<feature type="binding site" evidence="1">
    <location>
        <position position="92"/>
    </location>
    <ligand>
        <name>ATP</name>
        <dbReference type="ChEBI" id="CHEBI:30616"/>
    </ligand>
</feature>
<feature type="binding site" evidence="1">
    <location>
        <position position="104"/>
    </location>
    <ligand>
        <name>ATP</name>
        <dbReference type="ChEBI" id="CHEBI:30616"/>
    </ligand>
</feature>
<feature type="binding site" evidence="1">
    <location>
        <position position="114"/>
    </location>
    <ligand>
        <name>ATP</name>
        <dbReference type="ChEBI" id="CHEBI:30616"/>
    </ligand>
</feature>
<keyword id="KW-0067">ATP-binding</keyword>
<keyword id="KW-0963">Cytoplasm</keyword>
<keyword id="KW-0418">Kinase</keyword>
<keyword id="KW-0460">Magnesium</keyword>
<keyword id="KW-0479">Metal-binding</keyword>
<keyword id="KW-0546">Nucleotide metabolism</keyword>
<keyword id="KW-0547">Nucleotide-binding</keyword>
<keyword id="KW-0597">Phosphoprotein</keyword>
<keyword id="KW-0808">Transferase</keyword>
<name>NDK_RHOJR</name>
<accession>Q0SH47</accession>
<dbReference type="EC" id="2.7.4.6" evidence="1"/>
<dbReference type="EMBL" id="CP000431">
    <property type="protein sequence ID" value="ABG93139.1"/>
    <property type="molecule type" value="Genomic_DNA"/>
</dbReference>
<dbReference type="RefSeq" id="WP_005248085.1">
    <property type="nucleotide sequence ID" value="NC_008268.1"/>
</dbReference>
<dbReference type="SMR" id="Q0SH47"/>
<dbReference type="GeneID" id="69892976"/>
<dbReference type="KEGG" id="rha:RHA1_ro01315"/>
<dbReference type="eggNOG" id="COG0105">
    <property type="taxonomic scope" value="Bacteria"/>
</dbReference>
<dbReference type="HOGENOM" id="CLU_060216_6_3_11"/>
<dbReference type="OrthoDB" id="9801161at2"/>
<dbReference type="Proteomes" id="UP000008710">
    <property type="component" value="Chromosome"/>
</dbReference>
<dbReference type="GO" id="GO:0005737">
    <property type="term" value="C:cytoplasm"/>
    <property type="evidence" value="ECO:0007669"/>
    <property type="project" value="UniProtKB-SubCell"/>
</dbReference>
<dbReference type="GO" id="GO:0005524">
    <property type="term" value="F:ATP binding"/>
    <property type="evidence" value="ECO:0007669"/>
    <property type="project" value="UniProtKB-UniRule"/>
</dbReference>
<dbReference type="GO" id="GO:0046872">
    <property type="term" value="F:metal ion binding"/>
    <property type="evidence" value="ECO:0007669"/>
    <property type="project" value="UniProtKB-KW"/>
</dbReference>
<dbReference type="GO" id="GO:0004550">
    <property type="term" value="F:nucleoside diphosphate kinase activity"/>
    <property type="evidence" value="ECO:0007669"/>
    <property type="project" value="UniProtKB-UniRule"/>
</dbReference>
<dbReference type="GO" id="GO:0006241">
    <property type="term" value="P:CTP biosynthetic process"/>
    <property type="evidence" value="ECO:0007669"/>
    <property type="project" value="UniProtKB-UniRule"/>
</dbReference>
<dbReference type="GO" id="GO:0006183">
    <property type="term" value="P:GTP biosynthetic process"/>
    <property type="evidence" value="ECO:0007669"/>
    <property type="project" value="UniProtKB-UniRule"/>
</dbReference>
<dbReference type="GO" id="GO:0006228">
    <property type="term" value="P:UTP biosynthetic process"/>
    <property type="evidence" value="ECO:0007669"/>
    <property type="project" value="UniProtKB-UniRule"/>
</dbReference>
<dbReference type="CDD" id="cd04413">
    <property type="entry name" value="NDPk_I"/>
    <property type="match status" value="1"/>
</dbReference>
<dbReference type="FunFam" id="3.30.70.141:FF:000003">
    <property type="entry name" value="Nucleoside diphosphate kinase"/>
    <property type="match status" value="1"/>
</dbReference>
<dbReference type="Gene3D" id="3.30.70.141">
    <property type="entry name" value="Nucleoside diphosphate kinase-like domain"/>
    <property type="match status" value="1"/>
</dbReference>
<dbReference type="HAMAP" id="MF_00451">
    <property type="entry name" value="NDP_kinase"/>
    <property type="match status" value="1"/>
</dbReference>
<dbReference type="InterPro" id="IPR034907">
    <property type="entry name" value="NDK-like_dom"/>
</dbReference>
<dbReference type="InterPro" id="IPR036850">
    <property type="entry name" value="NDK-like_dom_sf"/>
</dbReference>
<dbReference type="InterPro" id="IPR001564">
    <property type="entry name" value="Nucleoside_diP_kinase"/>
</dbReference>
<dbReference type="InterPro" id="IPR023005">
    <property type="entry name" value="Nucleoside_diP_kinase_AS"/>
</dbReference>
<dbReference type="NCBIfam" id="NF001908">
    <property type="entry name" value="PRK00668.1"/>
    <property type="match status" value="1"/>
</dbReference>
<dbReference type="PANTHER" id="PTHR11349">
    <property type="entry name" value="NUCLEOSIDE DIPHOSPHATE KINASE"/>
    <property type="match status" value="1"/>
</dbReference>
<dbReference type="Pfam" id="PF00334">
    <property type="entry name" value="NDK"/>
    <property type="match status" value="1"/>
</dbReference>
<dbReference type="PRINTS" id="PR01243">
    <property type="entry name" value="NUCDPKINASE"/>
</dbReference>
<dbReference type="SMART" id="SM00562">
    <property type="entry name" value="NDK"/>
    <property type="match status" value="1"/>
</dbReference>
<dbReference type="SUPFAM" id="SSF54919">
    <property type="entry name" value="Nucleoside diphosphate kinase, NDK"/>
    <property type="match status" value="1"/>
</dbReference>
<dbReference type="PROSITE" id="PS00469">
    <property type="entry name" value="NDPK"/>
    <property type="match status" value="1"/>
</dbReference>
<dbReference type="PROSITE" id="PS51374">
    <property type="entry name" value="NDPK_LIKE"/>
    <property type="match status" value="1"/>
</dbReference>
<reference key="1">
    <citation type="journal article" date="2006" name="Proc. Natl. Acad. Sci. U.S.A.">
        <title>The complete genome of Rhodococcus sp. RHA1 provides insights into a catabolic powerhouse.</title>
        <authorList>
            <person name="McLeod M.P."/>
            <person name="Warren R.L."/>
            <person name="Hsiao W.W.L."/>
            <person name="Araki N."/>
            <person name="Myhre M."/>
            <person name="Fernandes C."/>
            <person name="Miyazawa D."/>
            <person name="Wong W."/>
            <person name="Lillquist A.L."/>
            <person name="Wang D."/>
            <person name="Dosanjh M."/>
            <person name="Hara H."/>
            <person name="Petrescu A."/>
            <person name="Morin R.D."/>
            <person name="Yang G."/>
            <person name="Stott J.M."/>
            <person name="Schein J.E."/>
            <person name="Shin H."/>
            <person name="Smailus D."/>
            <person name="Siddiqui A.S."/>
            <person name="Marra M.A."/>
            <person name="Jones S.J.M."/>
            <person name="Holt R."/>
            <person name="Brinkman F.S.L."/>
            <person name="Miyauchi K."/>
            <person name="Fukuda M."/>
            <person name="Davies J.E."/>
            <person name="Mohn W.W."/>
            <person name="Eltis L.D."/>
        </authorList>
    </citation>
    <scope>NUCLEOTIDE SEQUENCE [LARGE SCALE GENOMIC DNA]</scope>
    <source>
        <strain>RHA1</strain>
    </source>
</reference>